<dbReference type="EMBL" id="BA000017">
    <property type="protein sequence ID" value="BAB58427.1"/>
    <property type="molecule type" value="Genomic_DNA"/>
</dbReference>
<dbReference type="RefSeq" id="WP_000951058.1">
    <property type="nucleotide sequence ID" value="NC_002758.2"/>
</dbReference>
<dbReference type="SMR" id="P62086"/>
<dbReference type="KEGG" id="sav:SAV2265"/>
<dbReference type="HOGENOM" id="CLU_083287_18_2_9"/>
<dbReference type="PhylomeDB" id="P62086"/>
<dbReference type="Proteomes" id="UP000002481">
    <property type="component" value="Chromosome"/>
</dbReference>
<dbReference type="GO" id="GO:0003677">
    <property type="term" value="F:DNA binding"/>
    <property type="evidence" value="ECO:0007669"/>
    <property type="project" value="UniProtKB-KW"/>
</dbReference>
<dbReference type="GO" id="GO:0003700">
    <property type="term" value="F:DNA-binding transcription factor activity"/>
    <property type="evidence" value="ECO:0007669"/>
    <property type="project" value="InterPro"/>
</dbReference>
<dbReference type="GO" id="GO:0006950">
    <property type="term" value="P:response to stress"/>
    <property type="evidence" value="ECO:0007669"/>
    <property type="project" value="TreeGrafter"/>
</dbReference>
<dbReference type="FunFam" id="1.10.10.10:FF:000684">
    <property type="entry name" value="Transcriptional regulator, MarR family"/>
    <property type="match status" value="1"/>
</dbReference>
<dbReference type="Gene3D" id="1.10.10.10">
    <property type="entry name" value="Winged helix-like DNA-binding domain superfamily/Winged helix DNA-binding domain"/>
    <property type="match status" value="1"/>
</dbReference>
<dbReference type="InterPro" id="IPR000835">
    <property type="entry name" value="HTH_MarR-typ"/>
</dbReference>
<dbReference type="InterPro" id="IPR039422">
    <property type="entry name" value="MarR/SlyA-like"/>
</dbReference>
<dbReference type="InterPro" id="IPR023187">
    <property type="entry name" value="Tscrpt_reg_MarR-type_CS"/>
</dbReference>
<dbReference type="InterPro" id="IPR036388">
    <property type="entry name" value="WH-like_DNA-bd_sf"/>
</dbReference>
<dbReference type="InterPro" id="IPR036390">
    <property type="entry name" value="WH_DNA-bd_sf"/>
</dbReference>
<dbReference type="PANTHER" id="PTHR33164">
    <property type="entry name" value="TRANSCRIPTIONAL REGULATOR, MARR FAMILY"/>
    <property type="match status" value="1"/>
</dbReference>
<dbReference type="PANTHER" id="PTHR33164:SF44">
    <property type="entry name" value="TRANSCRIPTIONAL REGULATORY PROTEIN"/>
    <property type="match status" value="1"/>
</dbReference>
<dbReference type="Pfam" id="PF01047">
    <property type="entry name" value="MarR"/>
    <property type="match status" value="1"/>
</dbReference>
<dbReference type="SMART" id="SM00347">
    <property type="entry name" value="HTH_MARR"/>
    <property type="match status" value="1"/>
</dbReference>
<dbReference type="SUPFAM" id="SSF46785">
    <property type="entry name" value="Winged helix' DNA-binding domain"/>
    <property type="match status" value="1"/>
</dbReference>
<dbReference type="PROSITE" id="PS01117">
    <property type="entry name" value="HTH_MARR_1"/>
    <property type="match status" value="1"/>
</dbReference>
<dbReference type="PROSITE" id="PS50995">
    <property type="entry name" value="HTH_MARR_2"/>
    <property type="match status" value="1"/>
</dbReference>
<organism>
    <name type="scientific">Staphylococcus aureus (strain Mu50 / ATCC 700699)</name>
    <dbReference type="NCBI Taxonomy" id="158878"/>
    <lineage>
        <taxon>Bacteria</taxon>
        <taxon>Bacillati</taxon>
        <taxon>Bacillota</taxon>
        <taxon>Bacilli</taxon>
        <taxon>Bacillales</taxon>
        <taxon>Staphylococcaceae</taxon>
        <taxon>Staphylococcus</taxon>
    </lineage>
</organism>
<gene>
    <name type="ordered locus">SAV2265</name>
</gene>
<reference key="1">
    <citation type="journal article" date="2001" name="Lancet">
        <title>Whole genome sequencing of meticillin-resistant Staphylococcus aureus.</title>
        <authorList>
            <person name="Kuroda M."/>
            <person name="Ohta T."/>
            <person name="Uchiyama I."/>
            <person name="Baba T."/>
            <person name="Yuzawa H."/>
            <person name="Kobayashi I."/>
            <person name="Cui L."/>
            <person name="Oguchi A."/>
            <person name="Aoki K."/>
            <person name="Nagai Y."/>
            <person name="Lian J.-Q."/>
            <person name="Ito T."/>
            <person name="Kanamori M."/>
            <person name="Matsumaru H."/>
            <person name="Maruyama A."/>
            <person name="Murakami H."/>
            <person name="Hosoyama A."/>
            <person name="Mizutani-Ui Y."/>
            <person name="Takahashi N.K."/>
            <person name="Sawano T."/>
            <person name="Inoue R."/>
            <person name="Kaito C."/>
            <person name="Sekimizu K."/>
            <person name="Hirakawa H."/>
            <person name="Kuhara S."/>
            <person name="Goto S."/>
            <person name="Yabuzaki J."/>
            <person name="Kanehisa M."/>
            <person name="Yamashita A."/>
            <person name="Oshima K."/>
            <person name="Furuya K."/>
            <person name="Yoshino C."/>
            <person name="Shiba T."/>
            <person name="Hattori M."/>
            <person name="Ogasawara N."/>
            <person name="Hayashi H."/>
            <person name="Hiramatsu K."/>
        </authorList>
    </citation>
    <scope>NUCLEOTIDE SEQUENCE [LARGE SCALE GENOMIC DNA]</scope>
    <source>
        <strain>Mu50 / ATCC 700699</strain>
    </source>
</reference>
<keyword id="KW-0238">DNA-binding</keyword>
<keyword id="KW-0804">Transcription</keyword>
<keyword id="KW-0805">Transcription regulation</keyword>
<proteinExistence type="predicted"/>
<name>Y2265_STAAM</name>
<accession>P62086</accession>
<accession>Q99S07</accession>
<feature type="chain" id="PRO_0000054413" description="Uncharacterized HTH-type transcriptional regulator SAV2265">
    <location>
        <begin position="1"/>
        <end position="146"/>
    </location>
</feature>
<feature type="domain" description="HTH marR-type" evidence="1">
    <location>
        <begin position="1"/>
        <end position="137"/>
    </location>
</feature>
<evidence type="ECO:0000255" key="1">
    <source>
        <dbReference type="PROSITE-ProRule" id="PRU00345"/>
    </source>
</evidence>
<protein>
    <recommendedName>
        <fullName>Uncharacterized HTH-type transcriptional regulator SAV2265</fullName>
    </recommendedName>
</protein>
<sequence length="146" mass="17152">MLSQEFFNSFITIYRPYLKLAEPILEKHNIYYGQWLILRDIAKHQPTTLIEISHRRAIEKPTARKTLKALIENDLITVENSLEDKRQKFLTLTPKGHELYEIVCLDVQKLQQAVVAKTNISQDQMQETINVMNQIHEILLKEAHND</sequence>